<evidence type="ECO:0000255" key="1">
    <source>
        <dbReference type="HAMAP-Rule" id="MF_02053"/>
    </source>
</evidence>
<evidence type="ECO:0000269" key="2">
    <source>
    </source>
</evidence>
<evidence type="ECO:0000269" key="3">
    <source>
    </source>
</evidence>
<evidence type="ECO:0000269" key="4">
    <source>
    </source>
</evidence>
<organism>
    <name type="scientific">Salmonella typhimurium (strain LT2 / SGSC1412 / ATCC 700720)</name>
    <dbReference type="NCBI Taxonomy" id="99287"/>
    <lineage>
        <taxon>Bacteria</taxon>
        <taxon>Pseudomonadati</taxon>
        <taxon>Pseudomonadota</taxon>
        <taxon>Gammaproteobacteria</taxon>
        <taxon>Enterobacterales</taxon>
        <taxon>Enterobacteriaceae</taxon>
        <taxon>Salmonella</taxon>
    </lineage>
</organism>
<reference key="1">
    <citation type="journal article" date="2001" name="Nature">
        <title>Complete genome sequence of Salmonella enterica serovar Typhimurium LT2.</title>
        <authorList>
            <person name="McClelland M."/>
            <person name="Sanderson K.E."/>
            <person name="Spieth J."/>
            <person name="Clifton S.W."/>
            <person name="Latreille P."/>
            <person name="Courtney L."/>
            <person name="Porwollik S."/>
            <person name="Ali J."/>
            <person name="Dante M."/>
            <person name="Du F."/>
            <person name="Hou S."/>
            <person name="Layman D."/>
            <person name="Leonard S."/>
            <person name="Nguyen C."/>
            <person name="Scott K."/>
            <person name="Holmes A."/>
            <person name="Grewal N."/>
            <person name="Mulvaney E."/>
            <person name="Ryan E."/>
            <person name="Sun H."/>
            <person name="Florea L."/>
            <person name="Miller W."/>
            <person name="Stoneking T."/>
            <person name="Nhan M."/>
            <person name="Waterston R."/>
            <person name="Wilson R.K."/>
        </authorList>
    </citation>
    <scope>NUCLEOTIDE SEQUENCE [LARGE SCALE GENOMIC DNA]</scope>
    <source>
        <strain>LT2 / SGSC1412 / ATCC 700720</strain>
    </source>
</reference>
<reference key="2">
    <citation type="journal article" date="2003" name="Mol. Microbiol.">
        <title>Lsr-mediated transport and processing of AI-2 in Salmonella typhimurium.</title>
        <authorList>
            <person name="Taga M.E."/>
            <person name="Miller S.T."/>
            <person name="Bassler B.L."/>
        </authorList>
    </citation>
    <scope>FUNCTION AS A KINASE</scope>
    <source>
        <strain>ATCC 14028 / SGSG 2980 / CDC 6516-60 / NCTC 12023</strain>
    </source>
</reference>
<reference key="3">
    <citation type="journal article" date="2007" name="ACS Chem. Biol.">
        <title>Phosphorylation and processing of the quorum-sensing molecule autoinducer-2 in enteric bacteria.</title>
        <authorList>
            <person name="Xavier K.B."/>
            <person name="Miller S.T."/>
            <person name="Lu W."/>
            <person name="Kim J.H."/>
            <person name="Rabinowitz J."/>
            <person name="Pelczer I."/>
            <person name="Semmelhack M.F."/>
            <person name="Bassler B.L."/>
        </authorList>
    </citation>
    <scope>FUNCTION</scope>
    <scope>CATALYTIC ACTIVITY</scope>
</reference>
<reference key="4">
    <citation type="journal article" date="2013" name="J. Am. Chem. Soc.">
        <title>Mechanistic insights into the LsrK kinase required for autoinducer-2 quorum sensing activation.</title>
        <authorList>
            <person name="Zhu J."/>
            <person name="Hixon M.S."/>
            <person name="Globisch D."/>
            <person name="Kaufmann G.F."/>
            <person name="Janda K.D."/>
        </authorList>
    </citation>
    <scope>CATALYTIC ACTIVITY</scope>
    <scope>BIOPHYSICOCHEMICAL PROPERTIES</scope>
</reference>
<comment type="function">
    <text evidence="2 3">Catalyzes the phosphorylation of autoinducer-2 (AI-2) to phospho-AI-2, which subsequently inactivates the transcriptional regulator LsrR and leads to the transcription of the lsr operon. Phosphorylates the ring-open form of (S)-4,5-dihydroxypentane-2,3-dione (DPD), which is the precursor to all AI-2 signaling molecules, at the C5 position.</text>
</comment>
<comment type="catalytic activity">
    <reaction evidence="1 3 4">
        <text>(S)-4,5-dihydroxypentane-2,3-dione + ATP = (2S)-2-hydroxy-3,4-dioxopentyl phosphate + ADP + H(+)</text>
        <dbReference type="Rhea" id="RHEA:15377"/>
        <dbReference type="ChEBI" id="CHEBI:15378"/>
        <dbReference type="ChEBI" id="CHEBI:29484"/>
        <dbReference type="ChEBI" id="CHEBI:30616"/>
        <dbReference type="ChEBI" id="CHEBI:71677"/>
        <dbReference type="ChEBI" id="CHEBI:456216"/>
        <dbReference type="EC" id="2.7.1.189"/>
    </reaction>
</comment>
<comment type="biophysicochemical properties">
    <kinetics>
        <KM evidence="4">1 mM for (S)-4,5-dihydroxypentane-2,3-dione</KM>
        <KM evidence="4">150 uM for ATP</KM>
        <text evidence="4">kcat is 7.6 sec(-1).</text>
    </kinetics>
</comment>
<comment type="subcellular location">
    <subcellularLocation>
        <location evidence="1">Cytoplasm</location>
    </subcellularLocation>
</comment>
<comment type="similarity">
    <text evidence="1">Belongs to the FGGY kinase family.</text>
</comment>
<gene>
    <name evidence="1" type="primary">lsrK</name>
    <name type="ordered locus">STM4072</name>
</gene>
<sequence>MARLCTHTESGHYLMALDAGTGSVRAVIFDLQGKQIAVGQAEWQHLAVPDVPGSMEFDLAKNWQLACQCIRQALQKAAIPATAIAAVSACSMREGIVIYDSNGEPIWACANVDARAAHEVSELKELYDNTFEEEVYRCSGQTLALSAIPRLLWLAHHRPDIYHRASTVTMISDWMAFMLSGELAVDPSNAGTTGLLDLVTRNWKRSLLQMAGLRSDILSPVKETGTLLGHISQKAAEQCDLQAGTPVIVGGGDVQLGCLGLGVVRPAQTAVLGGTFWQQVVNLPAPVTDPNMNVRINPHVIPGMVQTESISFFTGLTMRWFRDAFCAEEKLIAERLGIDAYSLLEDMASRVPPGAYGVMPIFSDVMRFKRWYHAAPSFINLSIDPEKCNKATLFRALEENAAIVSACNLQQIAAFSGVQADSLVFAGGGSKGKLWSQILADVTGLTVHVPVVKEATALGCAIAAGVGVGVWPSLAETGEKLVRWDREHKPNPENFAVYQQAREKWQAVYQDQRALVDGGLTTSLWKAPGL</sequence>
<protein>
    <recommendedName>
        <fullName evidence="1">Autoinducer-2 kinase</fullName>
        <shortName evidence="1">AI-2 kinase</shortName>
        <ecNumber evidence="1 3 4">2.7.1.189</ecNumber>
    </recommendedName>
</protein>
<dbReference type="EC" id="2.7.1.189" evidence="1 3 4"/>
<dbReference type="EMBL" id="AE006468">
    <property type="protein sequence ID" value="AAL22912.1"/>
    <property type="molecule type" value="Genomic_DNA"/>
</dbReference>
<dbReference type="RefSeq" id="WP_000113089.1">
    <property type="nucleotide sequence ID" value="NC_003197.2"/>
</dbReference>
<dbReference type="SMR" id="Q8ZKQ6"/>
<dbReference type="STRING" id="99287.STM4072"/>
<dbReference type="BindingDB" id="Q8ZKQ6"/>
<dbReference type="ChEMBL" id="CHEMBL4523412"/>
<dbReference type="PaxDb" id="99287-STM4072"/>
<dbReference type="KEGG" id="stm:STM4072"/>
<dbReference type="PATRIC" id="fig|99287.12.peg.4292"/>
<dbReference type="HOGENOM" id="CLU_009281_3_4_6"/>
<dbReference type="PhylomeDB" id="Q8ZKQ6"/>
<dbReference type="BioCyc" id="SENT99287:STM4072-MONOMER"/>
<dbReference type="BRENDA" id="2.7.1.189">
    <property type="organism ID" value="5542"/>
</dbReference>
<dbReference type="Proteomes" id="UP000001014">
    <property type="component" value="Chromosome"/>
</dbReference>
<dbReference type="GO" id="GO:0005737">
    <property type="term" value="C:cytoplasm"/>
    <property type="evidence" value="ECO:0007669"/>
    <property type="project" value="UniProtKB-SubCell"/>
</dbReference>
<dbReference type="GO" id="GO:0071518">
    <property type="term" value="F:autoinducer-2 kinase activity"/>
    <property type="evidence" value="ECO:0007669"/>
    <property type="project" value="UniProtKB-UniRule"/>
</dbReference>
<dbReference type="GO" id="GO:0005975">
    <property type="term" value="P:carbohydrate metabolic process"/>
    <property type="evidence" value="ECO:0007669"/>
    <property type="project" value="InterPro"/>
</dbReference>
<dbReference type="GO" id="GO:0009372">
    <property type="term" value="P:quorum sensing"/>
    <property type="evidence" value="ECO:0007669"/>
    <property type="project" value="InterPro"/>
</dbReference>
<dbReference type="CDD" id="cd07775">
    <property type="entry name" value="ASKHA_NBD_FGGY_AI-2K"/>
    <property type="match status" value="1"/>
</dbReference>
<dbReference type="Gene3D" id="3.30.420.40">
    <property type="match status" value="2"/>
</dbReference>
<dbReference type="HAMAP" id="MF_02053">
    <property type="entry name" value="LsrK"/>
    <property type="match status" value="1"/>
</dbReference>
<dbReference type="InterPro" id="IPR033676">
    <property type="entry name" value="AI-2_kinase"/>
</dbReference>
<dbReference type="InterPro" id="IPR043129">
    <property type="entry name" value="ATPase_NBD"/>
</dbReference>
<dbReference type="InterPro" id="IPR000577">
    <property type="entry name" value="Carb_kinase_FGGY"/>
</dbReference>
<dbReference type="InterPro" id="IPR018485">
    <property type="entry name" value="FGGY_C"/>
</dbReference>
<dbReference type="InterPro" id="IPR050406">
    <property type="entry name" value="FGGY_Carb_Kinase"/>
</dbReference>
<dbReference type="InterPro" id="IPR018484">
    <property type="entry name" value="FGGY_N"/>
</dbReference>
<dbReference type="NCBIfam" id="NF008187">
    <property type="entry name" value="PRK10939.1"/>
    <property type="match status" value="1"/>
</dbReference>
<dbReference type="PANTHER" id="PTHR43095:SF1">
    <property type="entry name" value="AUTOINDUCER-2 KINASE"/>
    <property type="match status" value="1"/>
</dbReference>
<dbReference type="PANTHER" id="PTHR43095">
    <property type="entry name" value="SUGAR KINASE"/>
    <property type="match status" value="1"/>
</dbReference>
<dbReference type="Pfam" id="PF02782">
    <property type="entry name" value="FGGY_C"/>
    <property type="match status" value="1"/>
</dbReference>
<dbReference type="Pfam" id="PF00370">
    <property type="entry name" value="FGGY_N"/>
    <property type="match status" value="1"/>
</dbReference>
<dbReference type="PIRSF" id="PIRSF000538">
    <property type="entry name" value="GlpK"/>
    <property type="match status" value="1"/>
</dbReference>
<dbReference type="SUPFAM" id="SSF53067">
    <property type="entry name" value="Actin-like ATPase domain"/>
    <property type="match status" value="2"/>
</dbReference>
<keyword id="KW-0963">Cytoplasm</keyword>
<keyword id="KW-0418">Kinase</keyword>
<keyword id="KW-1185">Reference proteome</keyword>
<keyword id="KW-0808">Transferase</keyword>
<proteinExistence type="evidence at protein level"/>
<name>LSRK_SALTY</name>
<accession>Q8ZKQ6</accession>
<feature type="chain" id="PRO_0000351599" description="Autoinducer-2 kinase">
    <location>
        <begin position="1"/>
        <end position="530"/>
    </location>
</feature>